<evidence type="ECO:0000255" key="1">
    <source>
        <dbReference type="HAMAP-Rule" id="MF_01042"/>
    </source>
</evidence>
<accession>Q5E3U4</accession>
<organism>
    <name type="scientific">Aliivibrio fischeri (strain ATCC 700601 / ES114)</name>
    <name type="common">Vibrio fischeri</name>
    <dbReference type="NCBI Taxonomy" id="312309"/>
    <lineage>
        <taxon>Bacteria</taxon>
        <taxon>Pseudomonadati</taxon>
        <taxon>Pseudomonadota</taxon>
        <taxon>Gammaproteobacteria</taxon>
        <taxon>Vibrionales</taxon>
        <taxon>Vibrionaceae</taxon>
        <taxon>Aliivibrio</taxon>
    </lineage>
</organism>
<name>SMRB_ALIF1</name>
<comment type="function">
    <text evidence="1">Acts as a ribosome collision sensor. Detects stalled/collided disomes (pairs of ribosomes where the leading ribosome is stalled and a second ribosome has collided with it) and endonucleolytically cleaves mRNA at the 5' boundary of the stalled ribosome. Stalled/collided disomes form a new interface (primarily via the 30S subunits) that binds SmrB. Cleaved mRNA becomes available for tmRNA ligation, leading to ribosomal subunit dissociation and rescue of stalled ribosomes.</text>
</comment>
<comment type="subunit">
    <text evidence="1">Associates with collided ribosomes, but not with correctly translating polysomes.</text>
</comment>
<comment type="similarity">
    <text evidence="1">Belongs to the SmrB family.</text>
</comment>
<protein>
    <recommendedName>
        <fullName evidence="1">Ribosome rescue factor SmrB</fullName>
        <ecNumber evidence="1">3.1.-.-</ecNumber>
    </recommendedName>
</protein>
<reference key="1">
    <citation type="journal article" date="2005" name="Proc. Natl. Acad. Sci. U.S.A.">
        <title>Complete genome sequence of Vibrio fischeri: a symbiotic bacterium with pathogenic congeners.</title>
        <authorList>
            <person name="Ruby E.G."/>
            <person name="Urbanowski M."/>
            <person name="Campbell J."/>
            <person name="Dunn A."/>
            <person name="Faini M."/>
            <person name="Gunsalus R."/>
            <person name="Lostroh P."/>
            <person name="Lupp C."/>
            <person name="McCann J."/>
            <person name="Millikan D."/>
            <person name="Schaefer A."/>
            <person name="Stabb E."/>
            <person name="Stevens A."/>
            <person name="Visick K."/>
            <person name="Whistler C."/>
            <person name="Greenberg E.P."/>
        </authorList>
    </citation>
    <scope>NUCLEOTIDE SEQUENCE [LARGE SCALE GENOMIC DNA]</scope>
    <source>
        <strain>ATCC 700601 / ES114</strain>
    </source>
</reference>
<gene>
    <name evidence="1" type="primary">smrB</name>
    <name type="ordered locus">VF_1807</name>
</gene>
<sequence>MSKNDHLSDDELSLFREAVQGSKKLQQDTIIHQPSKNFSDLQQQRKSLKEGKNEEFFFSDEFVPLLSEDGPIRYARDDVSKYEVKRLRRGVYVPDVFLDMHGMKQDEAKRELGSMIAYCLKENISCASVMHGIGKHILKQKVPLWLAQHPDVMAFHQAPLEFGGAGAILVLLSIPDR</sequence>
<keyword id="KW-0255">Endonuclease</keyword>
<keyword id="KW-0378">Hydrolase</keyword>
<keyword id="KW-0540">Nuclease</keyword>
<keyword id="KW-1185">Reference proteome</keyword>
<keyword id="KW-0694">RNA-binding</keyword>
<keyword id="KW-0699">rRNA-binding</keyword>
<proteinExistence type="inferred from homology"/>
<dbReference type="EC" id="3.1.-.-" evidence="1"/>
<dbReference type="EMBL" id="CP000020">
    <property type="protein sequence ID" value="AAW86302.1"/>
    <property type="molecule type" value="Genomic_DNA"/>
</dbReference>
<dbReference type="RefSeq" id="WP_005420263.1">
    <property type="nucleotide sequence ID" value="NZ_CAWLES010000001.1"/>
</dbReference>
<dbReference type="RefSeq" id="YP_205190.1">
    <property type="nucleotide sequence ID" value="NC_006840.2"/>
</dbReference>
<dbReference type="SMR" id="Q5E3U4"/>
<dbReference type="STRING" id="312309.VF_1807"/>
<dbReference type="EnsemblBacteria" id="AAW86302">
    <property type="protein sequence ID" value="AAW86302"/>
    <property type="gene ID" value="VF_1807"/>
</dbReference>
<dbReference type="GeneID" id="54164508"/>
<dbReference type="KEGG" id="vfi:VF_1807"/>
<dbReference type="PATRIC" id="fig|312309.11.peg.1835"/>
<dbReference type="eggNOG" id="COG2840">
    <property type="taxonomic scope" value="Bacteria"/>
</dbReference>
<dbReference type="HOGENOM" id="CLU_055978_4_0_6"/>
<dbReference type="OrthoDB" id="5795446at2"/>
<dbReference type="Proteomes" id="UP000000537">
    <property type="component" value="Chromosome I"/>
</dbReference>
<dbReference type="GO" id="GO:0004521">
    <property type="term" value="F:RNA endonuclease activity"/>
    <property type="evidence" value="ECO:0007669"/>
    <property type="project" value="UniProtKB-UniRule"/>
</dbReference>
<dbReference type="GO" id="GO:0019843">
    <property type="term" value="F:rRNA binding"/>
    <property type="evidence" value="ECO:0007669"/>
    <property type="project" value="UniProtKB-UniRule"/>
</dbReference>
<dbReference type="GO" id="GO:0072344">
    <property type="term" value="P:rescue of stalled ribosome"/>
    <property type="evidence" value="ECO:0007669"/>
    <property type="project" value="UniProtKB-UniRule"/>
</dbReference>
<dbReference type="Gene3D" id="3.30.1370.110">
    <property type="match status" value="1"/>
</dbReference>
<dbReference type="HAMAP" id="MF_01042">
    <property type="entry name" value="SmrB"/>
    <property type="match status" value="1"/>
</dbReference>
<dbReference type="InterPro" id="IPR002625">
    <property type="entry name" value="Smr_dom"/>
</dbReference>
<dbReference type="InterPro" id="IPR036063">
    <property type="entry name" value="Smr_dom_sf"/>
</dbReference>
<dbReference type="InterPro" id="IPR022990">
    <property type="entry name" value="SmrB-like"/>
</dbReference>
<dbReference type="NCBIfam" id="NF003432">
    <property type="entry name" value="PRK04946.1"/>
    <property type="match status" value="1"/>
</dbReference>
<dbReference type="PANTHER" id="PTHR35562">
    <property type="entry name" value="DNA ENDONUCLEASE SMRA-RELATED"/>
    <property type="match status" value="1"/>
</dbReference>
<dbReference type="PANTHER" id="PTHR35562:SF1">
    <property type="entry name" value="UPF0115 PROTEIN YFCN"/>
    <property type="match status" value="1"/>
</dbReference>
<dbReference type="Pfam" id="PF01713">
    <property type="entry name" value="Smr"/>
    <property type="match status" value="1"/>
</dbReference>
<dbReference type="SMART" id="SM00463">
    <property type="entry name" value="SMR"/>
    <property type="match status" value="1"/>
</dbReference>
<dbReference type="SUPFAM" id="SSF160443">
    <property type="entry name" value="SMR domain-like"/>
    <property type="match status" value="1"/>
</dbReference>
<dbReference type="PROSITE" id="PS50828">
    <property type="entry name" value="SMR"/>
    <property type="match status" value="1"/>
</dbReference>
<feature type="chain" id="PRO_1000136056" description="Ribosome rescue factor SmrB">
    <location>
        <begin position="1"/>
        <end position="177"/>
    </location>
</feature>
<feature type="domain" description="Smr" evidence="1">
    <location>
        <begin position="98"/>
        <end position="173"/>
    </location>
</feature>